<gene>
    <name evidence="1" type="primary">ctaB</name>
    <name type="ordered locus">ABC2902</name>
</gene>
<keyword id="KW-1003">Cell membrane</keyword>
<keyword id="KW-0350">Heme biosynthesis</keyword>
<keyword id="KW-0472">Membrane</keyword>
<keyword id="KW-1185">Reference proteome</keyword>
<keyword id="KW-0808">Transferase</keyword>
<keyword id="KW-0812">Transmembrane</keyword>
<keyword id="KW-1133">Transmembrane helix</keyword>
<dbReference type="EC" id="2.5.1.141" evidence="1"/>
<dbReference type="EMBL" id="AP006627">
    <property type="protein sequence ID" value="BAD65436.1"/>
    <property type="molecule type" value="Genomic_DNA"/>
</dbReference>
<dbReference type="SMR" id="Q5WDX4"/>
<dbReference type="STRING" id="66692.ABC2902"/>
<dbReference type="KEGG" id="bcl:ABC2902"/>
<dbReference type="eggNOG" id="COG0109">
    <property type="taxonomic scope" value="Bacteria"/>
</dbReference>
<dbReference type="HOGENOM" id="CLU_029631_0_0_9"/>
<dbReference type="OrthoDB" id="9814417at2"/>
<dbReference type="UniPathway" id="UPA00834">
    <property type="reaction ID" value="UER00712"/>
</dbReference>
<dbReference type="Proteomes" id="UP000001168">
    <property type="component" value="Chromosome"/>
</dbReference>
<dbReference type="GO" id="GO:0005886">
    <property type="term" value="C:plasma membrane"/>
    <property type="evidence" value="ECO:0007669"/>
    <property type="project" value="UniProtKB-SubCell"/>
</dbReference>
<dbReference type="GO" id="GO:0008495">
    <property type="term" value="F:protoheme IX farnesyltransferase activity"/>
    <property type="evidence" value="ECO:0007669"/>
    <property type="project" value="UniProtKB-UniRule"/>
</dbReference>
<dbReference type="GO" id="GO:0048034">
    <property type="term" value="P:heme O biosynthetic process"/>
    <property type="evidence" value="ECO:0007669"/>
    <property type="project" value="UniProtKB-UniRule"/>
</dbReference>
<dbReference type="CDD" id="cd13957">
    <property type="entry name" value="PT_UbiA_Cox10"/>
    <property type="match status" value="1"/>
</dbReference>
<dbReference type="Gene3D" id="1.10.357.140">
    <property type="entry name" value="UbiA prenyltransferase"/>
    <property type="match status" value="1"/>
</dbReference>
<dbReference type="HAMAP" id="MF_00154">
    <property type="entry name" value="CyoE_CtaB"/>
    <property type="match status" value="1"/>
</dbReference>
<dbReference type="InterPro" id="IPR006369">
    <property type="entry name" value="Protohaem_IX_farnesylTrfase"/>
</dbReference>
<dbReference type="InterPro" id="IPR000537">
    <property type="entry name" value="UbiA_prenyltransferase"/>
</dbReference>
<dbReference type="InterPro" id="IPR030470">
    <property type="entry name" value="UbiA_prenylTrfase_CS"/>
</dbReference>
<dbReference type="InterPro" id="IPR044878">
    <property type="entry name" value="UbiA_sf"/>
</dbReference>
<dbReference type="NCBIfam" id="TIGR01473">
    <property type="entry name" value="cyoE_ctaB"/>
    <property type="match status" value="1"/>
</dbReference>
<dbReference type="PANTHER" id="PTHR43448">
    <property type="entry name" value="PROTOHEME IX FARNESYLTRANSFERASE, MITOCHONDRIAL"/>
    <property type="match status" value="1"/>
</dbReference>
<dbReference type="PANTHER" id="PTHR43448:SF2">
    <property type="entry name" value="PROTOHEME IX FARNESYLTRANSFERASE, MITOCHONDRIAL"/>
    <property type="match status" value="1"/>
</dbReference>
<dbReference type="Pfam" id="PF01040">
    <property type="entry name" value="UbiA"/>
    <property type="match status" value="1"/>
</dbReference>
<dbReference type="PROSITE" id="PS00943">
    <property type="entry name" value="UBIA"/>
    <property type="match status" value="1"/>
</dbReference>
<sequence>MRTEKIDKSIHNASLATPKQAFSQVLSETLKTGIIKSNLLAMAAGLSLALYVTGIPIGEKLPEILFAIFGSAFVIGAAGAFNNIYDRDIDAIMDRTKNRPTVTGRMQPANALVLGISLSLLGLLLLGVASPRAALFGFLGLFLYVVPYTMWSKRRTIYNTEIGSVGGAVPPLIGWAAISGDLVHPAIIGLFVVTVLWQMPHFYAIAIRRYDEYKAAKVPMLPVVKGFKRTFIQTNVYLVVLAASSFFFVSLSWFITIVALVLSLIWLTLSIAGYKRMEPKKWATLMFVFSLNYLTILFTVIIGFSLLSPLF</sequence>
<feature type="chain" id="PRO_0000327005" description="Protoheme IX farnesyltransferase">
    <location>
        <begin position="1"/>
        <end position="311"/>
    </location>
</feature>
<feature type="transmembrane region" description="Helical" evidence="1">
    <location>
        <begin position="39"/>
        <end position="59"/>
    </location>
</feature>
<feature type="transmembrane region" description="Helical" evidence="1">
    <location>
        <begin position="61"/>
        <end position="81"/>
    </location>
</feature>
<feature type="transmembrane region" description="Helical" evidence="1">
    <location>
        <begin position="111"/>
        <end position="131"/>
    </location>
</feature>
<feature type="transmembrane region" description="Helical" evidence="1">
    <location>
        <begin position="133"/>
        <end position="153"/>
    </location>
</feature>
<feature type="transmembrane region" description="Helical" evidence="1">
    <location>
        <begin position="162"/>
        <end position="182"/>
    </location>
</feature>
<feature type="transmembrane region" description="Helical" evidence="1">
    <location>
        <begin position="187"/>
        <end position="207"/>
    </location>
</feature>
<feature type="transmembrane region" description="Helical" evidence="1">
    <location>
        <begin position="246"/>
        <end position="266"/>
    </location>
</feature>
<feature type="transmembrane region" description="Helical" evidence="1">
    <location>
        <begin position="287"/>
        <end position="307"/>
    </location>
</feature>
<organism>
    <name type="scientific">Shouchella clausii (strain KSM-K16)</name>
    <name type="common">Alkalihalobacillus clausii</name>
    <dbReference type="NCBI Taxonomy" id="66692"/>
    <lineage>
        <taxon>Bacteria</taxon>
        <taxon>Bacillati</taxon>
        <taxon>Bacillota</taxon>
        <taxon>Bacilli</taxon>
        <taxon>Bacillales</taxon>
        <taxon>Bacillaceae</taxon>
        <taxon>Shouchella</taxon>
    </lineage>
</organism>
<accession>Q5WDX4</accession>
<evidence type="ECO:0000255" key="1">
    <source>
        <dbReference type="HAMAP-Rule" id="MF_00154"/>
    </source>
</evidence>
<reference key="1">
    <citation type="submission" date="2003-10" db="EMBL/GenBank/DDBJ databases">
        <title>The complete genome sequence of the alkaliphilic Bacillus clausii KSM-K16.</title>
        <authorList>
            <person name="Takaki Y."/>
            <person name="Kageyama Y."/>
            <person name="Shimamura S."/>
            <person name="Suzuki H."/>
            <person name="Nishi S."/>
            <person name="Hatada Y."/>
            <person name="Kawai S."/>
            <person name="Ito S."/>
            <person name="Horikoshi K."/>
        </authorList>
    </citation>
    <scope>NUCLEOTIDE SEQUENCE [LARGE SCALE GENOMIC DNA]</scope>
    <source>
        <strain>KSM-K16</strain>
    </source>
</reference>
<name>COXX_SHOC1</name>
<protein>
    <recommendedName>
        <fullName evidence="1">Protoheme IX farnesyltransferase</fullName>
        <ecNumber evidence="1">2.5.1.141</ecNumber>
    </recommendedName>
    <alternativeName>
        <fullName evidence="1">Heme B farnesyltransferase</fullName>
    </alternativeName>
    <alternativeName>
        <fullName evidence="1">Heme O synthase</fullName>
    </alternativeName>
</protein>
<comment type="function">
    <text evidence="1">Converts heme B (protoheme IX) to heme O by substitution of the vinyl group on carbon 2 of heme B porphyrin ring with a hydroxyethyl farnesyl side group.</text>
</comment>
<comment type="catalytic activity">
    <reaction evidence="1">
        <text>heme b + (2E,6E)-farnesyl diphosphate + H2O = Fe(II)-heme o + diphosphate</text>
        <dbReference type="Rhea" id="RHEA:28070"/>
        <dbReference type="ChEBI" id="CHEBI:15377"/>
        <dbReference type="ChEBI" id="CHEBI:33019"/>
        <dbReference type="ChEBI" id="CHEBI:60344"/>
        <dbReference type="ChEBI" id="CHEBI:60530"/>
        <dbReference type="ChEBI" id="CHEBI:175763"/>
        <dbReference type="EC" id="2.5.1.141"/>
    </reaction>
</comment>
<comment type="pathway">
    <text evidence="1">Porphyrin-containing compound metabolism; heme O biosynthesis; heme O from protoheme: step 1/1.</text>
</comment>
<comment type="subunit">
    <text evidence="1">Interacts with CtaA.</text>
</comment>
<comment type="subcellular location">
    <subcellularLocation>
        <location evidence="1">Cell membrane</location>
        <topology evidence="1">Multi-pass membrane protein</topology>
    </subcellularLocation>
</comment>
<comment type="miscellaneous">
    <text evidence="1">Carbon 2 of the heme B porphyrin ring is defined according to the Fischer nomenclature.</text>
</comment>
<comment type="similarity">
    <text evidence="1">Belongs to the UbiA prenyltransferase family. Protoheme IX farnesyltransferase subfamily.</text>
</comment>
<proteinExistence type="inferred from homology"/>